<comment type="similarity">
    <text evidence="2">Belongs to the UPF0329 family.</text>
</comment>
<accession>Q8SWH6</accession>
<feature type="chain" id="PRO_0000223150" description="UPF0329 protein ECU02_0060">
    <location>
        <begin position="1"/>
        <end position="602"/>
    </location>
</feature>
<feature type="region of interest" description="Disordered" evidence="1">
    <location>
        <begin position="313"/>
        <end position="407"/>
    </location>
</feature>
<feature type="compositionally biased region" description="Basic and acidic residues" evidence="1">
    <location>
        <begin position="313"/>
        <end position="345"/>
    </location>
</feature>
<feature type="compositionally biased region" description="Basic residues" evidence="1">
    <location>
        <begin position="346"/>
        <end position="356"/>
    </location>
</feature>
<feature type="compositionally biased region" description="Basic and acidic residues" evidence="1">
    <location>
        <begin position="357"/>
        <end position="369"/>
    </location>
</feature>
<feature type="compositionally biased region" description="Acidic residues" evidence="1">
    <location>
        <begin position="370"/>
        <end position="384"/>
    </location>
</feature>
<organism>
    <name type="scientific">Encephalitozoon cuniculi (strain GB-M1)</name>
    <name type="common">Microsporidian parasite</name>
    <dbReference type="NCBI Taxonomy" id="284813"/>
    <lineage>
        <taxon>Eukaryota</taxon>
        <taxon>Fungi</taxon>
        <taxon>Fungi incertae sedis</taxon>
        <taxon>Microsporidia</taxon>
        <taxon>Unikaryonidae</taxon>
        <taxon>Encephalitozoon</taxon>
    </lineage>
</organism>
<keyword id="KW-1185">Reference proteome</keyword>
<gene>
    <name type="ordered locus">ECU02_0060</name>
</gene>
<sequence>MGMWLVWIFALDNILCASKEEEKKCELPRRLGEMNIKEITEKVEIDGLDTKIIIPFIFHDAKPVVSPITRYRDISQEERRYVEEIIKGLPKLVWDSMVWIYVPGYTWWIKSLMDNVFNATSFEGFNPVDLYKKAKGKSEIRFADLVMSIFRFNGRIVNRFGQRLVREVEVKIKEMSNEMPSSEKKEKEERLNQILEYGKKLCTREKQEEMLKAQKIVCDACVYLWEKGSEDRVAITIMVYLRNLEVQMIRSSMKKVKVGEPLTFYMNHEVLISAYKEYKIGVAGELVKQVLKNDKDIDSESVNRVVCSIREREEDERKRAEAESARNREELLRMEEREKGKEKGSKGKGRKKRGKKGAGEAKEESKEEDRGGEEEESVEADVPVEEMAVGGARPKKKSPKEESKGEERCYKVHKRVLRWMKSAERIKYELDNGEEEKWRGRSIEEIEEQKALHDIIEVLKLLRSKECDKFFVRTGKYMKGGSERWNMVGVGILEEGGKKRVGNVEVGLFEGKGGENIIYHLMFKPTDFEEEGEGARPSFGRCDGVDAIEEGRISDMSGFQYPPGVRSEITSSGSEFRIVWKNQRDTSLVLRSLTVLRIPEIR</sequence>
<evidence type="ECO:0000256" key="1">
    <source>
        <dbReference type="SAM" id="MobiDB-lite"/>
    </source>
</evidence>
<evidence type="ECO:0000305" key="2"/>
<dbReference type="EMBL" id="AL590442">
    <property type="protein sequence ID" value="CAD25037.1"/>
    <property type="molecule type" value="Genomic_DNA"/>
</dbReference>
<dbReference type="RefSeq" id="NP_584533.1">
    <property type="nucleotide sequence ID" value="NM_001040722.1"/>
</dbReference>
<dbReference type="SMR" id="Q8SWH6"/>
<dbReference type="STRING" id="284813.Q8SWH6"/>
<dbReference type="GeneID" id="858523"/>
<dbReference type="KEGG" id="ecu:ECU02_0060"/>
<dbReference type="VEuPathDB" id="MicrosporidiaDB:ECU02_0060"/>
<dbReference type="HOGENOM" id="CLU_035434_0_0_1"/>
<dbReference type="InParanoid" id="Q8SWH6"/>
<dbReference type="OrthoDB" id="14121at6029"/>
<dbReference type="Proteomes" id="UP000000819">
    <property type="component" value="Chromosome II"/>
</dbReference>
<dbReference type="InterPro" id="IPR022115">
    <property type="entry name" value="DUF3654"/>
</dbReference>
<dbReference type="InterPro" id="IPR011667">
    <property type="entry name" value="UPF0329"/>
</dbReference>
<dbReference type="Pfam" id="PF07753">
    <property type="entry name" value="DUF1609"/>
    <property type="match status" value="1"/>
</dbReference>
<dbReference type="Pfam" id="PF12376">
    <property type="entry name" value="DUF3654"/>
    <property type="match status" value="1"/>
</dbReference>
<proteinExistence type="inferred from homology"/>
<reference key="1">
    <citation type="journal article" date="2001" name="Nature">
        <title>Genome sequence and gene compaction of the eukaryote parasite Encephalitozoon cuniculi.</title>
        <authorList>
            <person name="Katinka M.D."/>
            <person name="Duprat S."/>
            <person name="Cornillot E."/>
            <person name="Metenier G."/>
            <person name="Thomarat F."/>
            <person name="Prensier G."/>
            <person name="Barbe V."/>
            <person name="Peyretaillade E."/>
            <person name="Brottier P."/>
            <person name="Wincker P."/>
            <person name="Delbac F."/>
            <person name="El Alaoui H."/>
            <person name="Peyret P."/>
            <person name="Saurin W."/>
            <person name="Gouy M."/>
            <person name="Weissenbach J."/>
            <person name="Vivares C.P."/>
        </authorList>
    </citation>
    <scope>NUCLEOTIDE SEQUENCE [LARGE SCALE GENOMIC DNA]</scope>
    <source>
        <strain>GB-M1</strain>
    </source>
</reference>
<name>Y206_ENCCU</name>
<protein>
    <recommendedName>
        <fullName>UPF0329 protein ECU02_0060</fullName>
    </recommendedName>
</protein>